<comment type="function">
    <text evidence="1">Catalyzes the reversible conversion of 2-phosphoglycerate (2-PG) into phosphoenolpyruvate (PEP). It is essential for the degradation of carbohydrates via glycolysis.</text>
</comment>
<comment type="catalytic activity">
    <reaction evidence="1">
        <text>(2R)-2-phosphoglycerate = phosphoenolpyruvate + H2O</text>
        <dbReference type="Rhea" id="RHEA:10164"/>
        <dbReference type="ChEBI" id="CHEBI:15377"/>
        <dbReference type="ChEBI" id="CHEBI:58289"/>
        <dbReference type="ChEBI" id="CHEBI:58702"/>
        <dbReference type="EC" id="4.2.1.11"/>
    </reaction>
</comment>
<comment type="cofactor">
    <cofactor evidence="1">
        <name>Mg(2+)</name>
        <dbReference type="ChEBI" id="CHEBI:18420"/>
    </cofactor>
    <text evidence="1">Binds a second Mg(2+) ion via substrate during catalysis.</text>
</comment>
<comment type="pathway">
    <text evidence="1">Carbohydrate degradation; glycolysis; pyruvate from D-glyceraldehyde 3-phosphate: step 4/5.</text>
</comment>
<comment type="subcellular location">
    <subcellularLocation>
        <location evidence="1">Cytoplasm</location>
    </subcellularLocation>
    <subcellularLocation>
        <location evidence="1">Secreted</location>
    </subcellularLocation>
    <subcellularLocation>
        <location evidence="1">Cell surface</location>
    </subcellularLocation>
    <text evidence="1">Fractions of enolase are present in both the cytoplasm and on the cell surface.</text>
</comment>
<comment type="similarity">
    <text evidence="1">Belongs to the enolase family.</text>
</comment>
<name>ENO_BACC0</name>
<evidence type="ECO:0000255" key="1">
    <source>
        <dbReference type="HAMAP-Rule" id="MF_00318"/>
    </source>
</evidence>
<accession>B7JFG3</accession>
<gene>
    <name evidence="1" type="primary">eno</name>
    <name type="ordered locus">BCAH820_5220</name>
</gene>
<feature type="chain" id="PRO_1000119563" description="Enolase">
    <location>
        <begin position="1"/>
        <end position="431"/>
    </location>
</feature>
<feature type="active site" description="Proton donor" evidence="1">
    <location>
        <position position="205"/>
    </location>
</feature>
<feature type="active site" description="Proton acceptor" evidence="1">
    <location>
        <position position="340"/>
    </location>
</feature>
<feature type="binding site" evidence="1">
    <location>
        <position position="163"/>
    </location>
    <ligand>
        <name>(2R)-2-phosphoglycerate</name>
        <dbReference type="ChEBI" id="CHEBI:58289"/>
    </ligand>
</feature>
<feature type="binding site" evidence="1">
    <location>
        <position position="242"/>
    </location>
    <ligand>
        <name>Mg(2+)</name>
        <dbReference type="ChEBI" id="CHEBI:18420"/>
    </ligand>
</feature>
<feature type="binding site" evidence="1">
    <location>
        <position position="288"/>
    </location>
    <ligand>
        <name>Mg(2+)</name>
        <dbReference type="ChEBI" id="CHEBI:18420"/>
    </ligand>
</feature>
<feature type="binding site" evidence="1">
    <location>
        <position position="315"/>
    </location>
    <ligand>
        <name>Mg(2+)</name>
        <dbReference type="ChEBI" id="CHEBI:18420"/>
    </ligand>
</feature>
<feature type="binding site" evidence="1">
    <location>
        <position position="340"/>
    </location>
    <ligand>
        <name>(2R)-2-phosphoglycerate</name>
        <dbReference type="ChEBI" id="CHEBI:58289"/>
    </ligand>
</feature>
<feature type="binding site" evidence="1">
    <location>
        <position position="369"/>
    </location>
    <ligand>
        <name>(2R)-2-phosphoglycerate</name>
        <dbReference type="ChEBI" id="CHEBI:58289"/>
    </ligand>
</feature>
<feature type="binding site" evidence="1">
    <location>
        <position position="370"/>
    </location>
    <ligand>
        <name>(2R)-2-phosphoglycerate</name>
        <dbReference type="ChEBI" id="CHEBI:58289"/>
    </ligand>
</feature>
<feature type="binding site" evidence="1">
    <location>
        <position position="391"/>
    </location>
    <ligand>
        <name>(2R)-2-phosphoglycerate</name>
        <dbReference type="ChEBI" id="CHEBI:58289"/>
    </ligand>
</feature>
<dbReference type="EC" id="4.2.1.11" evidence="1"/>
<dbReference type="EMBL" id="CP001283">
    <property type="protein sequence ID" value="ACK91365.1"/>
    <property type="molecule type" value="Genomic_DNA"/>
</dbReference>
<dbReference type="RefSeq" id="WP_000103949.1">
    <property type="nucleotide sequence ID" value="NC_011773.1"/>
</dbReference>
<dbReference type="SMR" id="B7JFG3"/>
<dbReference type="GeneID" id="83638809"/>
<dbReference type="KEGG" id="bcu:BCAH820_5220"/>
<dbReference type="HOGENOM" id="CLU_031223_2_1_9"/>
<dbReference type="UniPathway" id="UPA00109">
    <property type="reaction ID" value="UER00187"/>
</dbReference>
<dbReference type="Proteomes" id="UP000001363">
    <property type="component" value="Chromosome"/>
</dbReference>
<dbReference type="GO" id="GO:0009986">
    <property type="term" value="C:cell surface"/>
    <property type="evidence" value="ECO:0007669"/>
    <property type="project" value="UniProtKB-SubCell"/>
</dbReference>
<dbReference type="GO" id="GO:0005576">
    <property type="term" value="C:extracellular region"/>
    <property type="evidence" value="ECO:0007669"/>
    <property type="project" value="UniProtKB-SubCell"/>
</dbReference>
<dbReference type="GO" id="GO:0000015">
    <property type="term" value="C:phosphopyruvate hydratase complex"/>
    <property type="evidence" value="ECO:0007669"/>
    <property type="project" value="InterPro"/>
</dbReference>
<dbReference type="GO" id="GO:0000287">
    <property type="term" value="F:magnesium ion binding"/>
    <property type="evidence" value="ECO:0007669"/>
    <property type="project" value="UniProtKB-UniRule"/>
</dbReference>
<dbReference type="GO" id="GO:0004634">
    <property type="term" value="F:phosphopyruvate hydratase activity"/>
    <property type="evidence" value="ECO:0007669"/>
    <property type="project" value="UniProtKB-UniRule"/>
</dbReference>
<dbReference type="GO" id="GO:0006096">
    <property type="term" value="P:glycolytic process"/>
    <property type="evidence" value="ECO:0007669"/>
    <property type="project" value="UniProtKB-UniRule"/>
</dbReference>
<dbReference type="CDD" id="cd03313">
    <property type="entry name" value="enolase"/>
    <property type="match status" value="1"/>
</dbReference>
<dbReference type="FunFam" id="3.20.20.120:FF:000001">
    <property type="entry name" value="Enolase"/>
    <property type="match status" value="1"/>
</dbReference>
<dbReference type="FunFam" id="3.30.390.10:FF:000001">
    <property type="entry name" value="Enolase"/>
    <property type="match status" value="1"/>
</dbReference>
<dbReference type="Gene3D" id="3.20.20.120">
    <property type="entry name" value="Enolase-like C-terminal domain"/>
    <property type="match status" value="1"/>
</dbReference>
<dbReference type="Gene3D" id="3.30.390.10">
    <property type="entry name" value="Enolase-like, N-terminal domain"/>
    <property type="match status" value="1"/>
</dbReference>
<dbReference type="HAMAP" id="MF_00318">
    <property type="entry name" value="Enolase"/>
    <property type="match status" value="1"/>
</dbReference>
<dbReference type="InterPro" id="IPR000941">
    <property type="entry name" value="Enolase"/>
</dbReference>
<dbReference type="InterPro" id="IPR036849">
    <property type="entry name" value="Enolase-like_C_sf"/>
</dbReference>
<dbReference type="InterPro" id="IPR029017">
    <property type="entry name" value="Enolase-like_N"/>
</dbReference>
<dbReference type="InterPro" id="IPR020810">
    <property type="entry name" value="Enolase_C"/>
</dbReference>
<dbReference type="InterPro" id="IPR020809">
    <property type="entry name" value="Enolase_CS"/>
</dbReference>
<dbReference type="InterPro" id="IPR020811">
    <property type="entry name" value="Enolase_N"/>
</dbReference>
<dbReference type="NCBIfam" id="TIGR01060">
    <property type="entry name" value="eno"/>
    <property type="match status" value="1"/>
</dbReference>
<dbReference type="PANTHER" id="PTHR11902">
    <property type="entry name" value="ENOLASE"/>
    <property type="match status" value="1"/>
</dbReference>
<dbReference type="PANTHER" id="PTHR11902:SF1">
    <property type="entry name" value="ENOLASE"/>
    <property type="match status" value="1"/>
</dbReference>
<dbReference type="Pfam" id="PF00113">
    <property type="entry name" value="Enolase_C"/>
    <property type="match status" value="1"/>
</dbReference>
<dbReference type="Pfam" id="PF03952">
    <property type="entry name" value="Enolase_N"/>
    <property type="match status" value="1"/>
</dbReference>
<dbReference type="PIRSF" id="PIRSF001400">
    <property type="entry name" value="Enolase"/>
    <property type="match status" value="1"/>
</dbReference>
<dbReference type="PRINTS" id="PR00148">
    <property type="entry name" value="ENOLASE"/>
</dbReference>
<dbReference type="SFLD" id="SFLDS00001">
    <property type="entry name" value="Enolase"/>
    <property type="match status" value="1"/>
</dbReference>
<dbReference type="SFLD" id="SFLDF00002">
    <property type="entry name" value="enolase"/>
    <property type="match status" value="1"/>
</dbReference>
<dbReference type="SMART" id="SM01192">
    <property type="entry name" value="Enolase_C"/>
    <property type="match status" value="1"/>
</dbReference>
<dbReference type="SMART" id="SM01193">
    <property type="entry name" value="Enolase_N"/>
    <property type="match status" value="1"/>
</dbReference>
<dbReference type="SUPFAM" id="SSF51604">
    <property type="entry name" value="Enolase C-terminal domain-like"/>
    <property type="match status" value="1"/>
</dbReference>
<dbReference type="SUPFAM" id="SSF54826">
    <property type="entry name" value="Enolase N-terminal domain-like"/>
    <property type="match status" value="1"/>
</dbReference>
<dbReference type="PROSITE" id="PS00164">
    <property type="entry name" value="ENOLASE"/>
    <property type="match status" value="1"/>
</dbReference>
<sequence>MSTIIDVYAREVLDSRGNPTVEVEVYTESGAFGRAIVPSGASTGEHEAVELRDGDKSRYLGKGVMNAVNNVNEAIAPEIVGFDVTDQAGIDRAMIELDGTPNKGKLGANAILGVSMAVAHAAADFVGLPLYRYLGGFNAKQLPTPMMNIINGGSHADNNVDFQEFMILPVGAPTFKESIRMGAEVFHALKAVLHDKGLNTAVGDEGGFAPNLGSNREALEVIIEAIEKAGYKAGENVFLGMDVASSEFYNKETGKYDLAGEGRTGLTSAEMVDFYEELCKDFPIISIEDGLDENDWDGHKLLTERIGDKVQLVGDDLFVTNTQKLAEGIEKGISNSILIKVNQIGTLTETFEAIEMAKRAGYTAVVSHRSGETEDATIADIAVATNAGQIKTGSMSRTDRIAKYNQLLRIEDELGEIAVYDGIKSFYNIKR</sequence>
<proteinExistence type="inferred from homology"/>
<organism>
    <name type="scientific">Bacillus cereus (strain AH820)</name>
    <dbReference type="NCBI Taxonomy" id="405535"/>
    <lineage>
        <taxon>Bacteria</taxon>
        <taxon>Bacillati</taxon>
        <taxon>Bacillota</taxon>
        <taxon>Bacilli</taxon>
        <taxon>Bacillales</taxon>
        <taxon>Bacillaceae</taxon>
        <taxon>Bacillus</taxon>
        <taxon>Bacillus cereus group</taxon>
    </lineage>
</organism>
<reference key="1">
    <citation type="submission" date="2008-10" db="EMBL/GenBank/DDBJ databases">
        <title>Genome sequence of Bacillus cereus AH820.</title>
        <authorList>
            <person name="Dodson R.J."/>
            <person name="Durkin A.S."/>
            <person name="Rosovitz M.J."/>
            <person name="Rasko D.A."/>
            <person name="Hoffmaster A."/>
            <person name="Ravel J."/>
            <person name="Sutton G."/>
        </authorList>
    </citation>
    <scope>NUCLEOTIDE SEQUENCE [LARGE SCALE GENOMIC DNA]</scope>
    <source>
        <strain>AH820</strain>
    </source>
</reference>
<keyword id="KW-0963">Cytoplasm</keyword>
<keyword id="KW-0324">Glycolysis</keyword>
<keyword id="KW-0456">Lyase</keyword>
<keyword id="KW-0460">Magnesium</keyword>
<keyword id="KW-0479">Metal-binding</keyword>
<keyword id="KW-0964">Secreted</keyword>
<protein>
    <recommendedName>
        <fullName evidence="1">Enolase</fullName>
        <ecNumber evidence="1">4.2.1.11</ecNumber>
    </recommendedName>
    <alternativeName>
        <fullName evidence="1">2-phospho-D-glycerate hydro-lyase</fullName>
    </alternativeName>
    <alternativeName>
        <fullName evidence="1">2-phosphoglycerate dehydratase</fullName>
    </alternativeName>
</protein>